<name>NHAA_RHIEC</name>
<reference key="1">
    <citation type="journal article" date="2006" name="Proc. Natl. Acad. Sci. U.S.A.">
        <title>The partitioned Rhizobium etli genome: genetic and metabolic redundancy in seven interacting replicons.</title>
        <authorList>
            <person name="Gonzalez V."/>
            <person name="Santamaria R.I."/>
            <person name="Bustos P."/>
            <person name="Hernandez-Gonzalez I."/>
            <person name="Medrano-Soto A."/>
            <person name="Moreno-Hagelsieb G."/>
            <person name="Janga S.C."/>
            <person name="Ramirez M.A."/>
            <person name="Jimenez-Jacinto V."/>
            <person name="Collado-Vides J."/>
            <person name="Davila G."/>
        </authorList>
    </citation>
    <scope>NUCLEOTIDE SEQUENCE [LARGE SCALE GENOMIC DNA]</scope>
    <source>
        <strain>ATCC 51251 / DSM 11541 / JCM 21823 / NBRC 15573 / CFN 42</strain>
    </source>
</reference>
<sequence>MSQPISPGLIRSTLRQFLDSEASGGLVLMAVALAAIVTANSPLAEGYFHALHIYLGPLSLLHWINDALMALFFLLVGLEIKREMLDGQLSSWSRRILPGAAALGGMLFPALFYILFNRENPAALRGWAIPTATDIAFALGVISLFGPRVPASLKIFLAALAIIDDLGAVVIIALFYTSDLNLLALAAAAAVLAALYGMNRARILKLWPYLLLGAVLWVLVFASGIHATLAGVLLALTIPLKATPGTREASHEQSPLHHLEHILQKPVAFIVVPIFGFANAGVSFSGVSAATLTEPLTLGVAAGLLLGKLVGVLSTVFLLVKIGLADLPAKASWGQMTGVAALCGIGFTMSLFIGLLAFNDPDVQDHVKMGILLGSLLSGLVGAAMLATFNRRS</sequence>
<organism>
    <name type="scientific">Rhizobium etli (strain ATCC 51251 / DSM 11541 / JCM 21823 / NBRC 15573 / CFN 42)</name>
    <dbReference type="NCBI Taxonomy" id="347834"/>
    <lineage>
        <taxon>Bacteria</taxon>
        <taxon>Pseudomonadati</taxon>
        <taxon>Pseudomonadota</taxon>
        <taxon>Alphaproteobacteria</taxon>
        <taxon>Hyphomicrobiales</taxon>
        <taxon>Rhizobiaceae</taxon>
        <taxon>Rhizobium/Agrobacterium group</taxon>
        <taxon>Rhizobium</taxon>
    </lineage>
</organism>
<gene>
    <name evidence="1" type="primary">nhaA</name>
    <name type="ordered locus">RHE_CH00589</name>
</gene>
<dbReference type="EMBL" id="CP000133">
    <property type="protein sequence ID" value="ABC89405.1"/>
    <property type="molecule type" value="Genomic_DNA"/>
</dbReference>
<dbReference type="RefSeq" id="WP_011423954.1">
    <property type="nucleotide sequence ID" value="NC_007761.1"/>
</dbReference>
<dbReference type="SMR" id="Q2KCN1"/>
<dbReference type="KEGG" id="ret:RHE_CH00589"/>
<dbReference type="eggNOG" id="COG3004">
    <property type="taxonomic scope" value="Bacteria"/>
</dbReference>
<dbReference type="HOGENOM" id="CLU_015803_1_0_5"/>
<dbReference type="OrthoDB" id="9808135at2"/>
<dbReference type="Proteomes" id="UP000001936">
    <property type="component" value="Chromosome"/>
</dbReference>
<dbReference type="GO" id="GO:0005886">
    <property type="term" value="C:plasma membrane"/>
    <property type="evidence" value="ECO:0007669"/>
    <property type="project" value="UniProtKB-SubCell"/>
</dbReference>
<dbReference type="GO" id="GO:0015385">
    <property type="term" value="F:sodium:proton antiporter activity"/>
    <property type="evidence" value="ECO:0007669"/>
    <property type="project" value="TreeGrafter"/>
</dbReference>
<dbReference type="GO" id="GO:0006885">
    <property type="term" value="P:regulation of pH"/>
    <property type="evidence" value="ECO:0007669"/>
    <property type="project" value="InterPro"/>
</dbReference>
<dbReference type="Gene3D" id="1.20.1530.10">
    <property type="entry name" value="Na+/H+ antiporter like domain"/>
    <property type="match status" value="1"/>
</dbReference>
<dbReference type="HAMAP" id="MF_01844">
    <property type="entry name" value="NhaA"/>
    <property type="match status" value="1"/>
</dbReference>
<dbReference type="InterPro" id="IPR023171">
    <property type="entry name" value="Na/H_antiporter_dom_sf"/>
</dbReference>
<dbReference type="InterPro" id="IPR004670">
    <property type="entry name" value="NhaA"/>
</dbReference>
<dbReference type="NCBIfam" id="TIGR00773">
    <property type="entry name" value="NhaA"/>
    <property type="match status" value="1"/>
</dbReference>
<dbReference type="NCBIfam" id="NF007111">
    <property type="entry name" value="PRK09560.1"/>
    <property type="match status" value="1"/>
</dbReference>
<dbReference type="NCBIfam" id="NF007112">
    <property type="entry name" value="PRK09561.1"/>
    <property type="match status" value="1"/>
</dbReference>
<dbReference type="PANTHER" id="PTHR30341:SF0">
    <property type="entry name" value="NA(+)_H(+) ANTIPORTER NHAA"/>
    <property type="match status" value="1"/>
</dbReference>
<dbReference type="PANTHER" id="PTHR30341">
    <property type="entry name" value="SODIUM ION/PROTON ANTIPORTER NHAA-RELATED"/>
    <property type="match status" value="1"/>
</dbReference>
<dbReference type="Pfam" id="PF06965">
    <property type="entry name" value="Na_H_antiport_1"/>
    <property type="match status" value="1"/>
</dbReference>
<proteinExistence type="inferred from homology"/>
<accession>Q2KCN1</accession>
<feature type="chain" id="PRO_0000334388" description="Na(+)/H(+) antiporter NhaA">
    <location>
        <begin position="1"/>
        <end position="393"/>
    </location>
</feature>
<feature type="transmembrane region" description="Helical" evidence="1">
    <location>
        <begin position="24"/>
        <end position="44"/>
    </location>
</feature>
<feature type="transmembrane region" description="Helical" evidence="1">
    <location>
        <begin position="58"/>
        <end position="78"/>
    </location>
</feature>
<feature type="transmembrane region" description="Helical" evidence="1">
    <location>
        <begin position="96"/>
        <end position="116"/>
    </location>
</feature>
<feature type="transmembrane region" description="Helical" evidence="1">
    <location>
        <begin position="126"/>
        <end position="146"/>
    </location>
</feature>
<feature type="transmembrane region" description="Helical" evidence="1">
    <location>
        <begin position="155"/>
        <end position="175"/>
    </location>
</feature>
<feature type="transmembrane region" description="Helical" evidence="1">
    <location>
        <begin position="178"/>
        <end position="198"/>
    </location>
</feature>
<feature type="transmembrane region" description="Helical" evidence="1">
    <location>
        <begin position="214"/>
        <end position="234"/>
    </location>
</feature>
<feature type="transmembrane region" description="Helical" evidence="1">
    <location>
        <begin position="267"/>
        <end position="287"/>
    </location>
</feature>
<feature type="transmembrane region" description="Helical" evidence="1">
    <location>
        <begin position="300"/>
        <end position="320"/>
    </location>
</feature>
<feature type="transmembrane region" description="Helical" evidence="1">
    <location>
        <begin position="338"/>
        <end position="358"/>
    </location>
</feature>
<feature type="transmembrane region" description="Helical" evidence="1">
    <location>
        <begin position="369"/>
        <end position="389"/>
    </location>
</feature>
<keyword id="KW-0050">Antiport</keyword>
<keyword id="KW-0997">Cell inner membrane</keyword>
<keyword id="KW-1003">Cell membrane</keyword>
<keyword id="KW-0406">Ion transport</keyword>
<keyword id="KW-0472">Membrane</keyword>
<keyword id="KW-1185">Reference proteome</keyword>
<keyword id="KW-0915">Sodium</keyword>
<keyword id="KW-0739">Sodium transport</keyword>
<keyword id="KW-0812">Transmembrane</keyword>
<keyword id="KW-1133">Transmembrane helix</keyword>
<keyword id="KW-0813">Transport</keyword>
<protein>
    <recommendedName>
        <fullName evidence="1">Na(+)/H(+) antiporter NhaA</fullName>
    </recommendedName>
    <alternativeName>
        <fullName evidence="1">Sodium/proton antiporter NhaA</fullName>
    </alternativeName>
</protein>
<comment type="function">
    <text evidence="1">Na(+)/H(+) antiporter that extrudes sodium in exchange for external protons.</text>
</comment>
<comment type="catalytic activity">
    <reaction evidence="1">
        <text>Na(+)(in) + 2 H(+)(out) = Na(+)(out) + 2 H(+)(in)</text>
        <dbReference type="Rhea" id="RHEA:29251"/>
        <dbReference type="ChEBI" id="CHEBI:15378"/>
        <dbReference type="ChEBI" id="CHEBI:29101"/>
    </reaction>
    <physiologicalReaction direction="left-to-right" evidence="1">
        <dbReference type="Rhea" id="RHEA:29252"/>
    </physiologicalReaction>
</comment>
<comment type="subcellular location">
    <subcellularLocation>
        <location evidence="1">Cell inner membrane</location>
        <topology evidence="1">Multi-pass membrane protein</topology>
    </subcellularLocation>
</comment>
<comment type="similarity">
    <text evidence="1">Belongs to the NhaA Na(+)/H(+) (TC 2.A.33) antiporter family.</text>
</comment>
<evidence type="ECO:0000255" key="1">
    <source>
        <dbReference type="HAMAP-Rule" id="MF_01844"/>
    </source>
</evidence>